<comment type="function">
    <text evidence="1">Catalyzes the excretion of spermidine.</text>
</comment>
<comment type="subunit">
    <text evidence="1">Forms a complex with MdtJ.</text>
</comment>
<comment type="subcellular location">
    <subcellularLocation>
        <location evidence="1">Cell inner membrane</location>
        <topology evidence="1">Multi-pass membrane protein</topology>
    </subcellularLocation>
</comment>
<comment type="similarity">
    <text evidence="1">Belongs to the drug/metabolite transporter (DMT) superfamily. Small multidrug resistance (SMR) (TC 2.A.7.1) family. MdtI subfamily.</text>
</comment>
<dbReference type="EMBL" id="CP000950">
    <property type="protein sequence ID" value="ACA68416.1"/>
    <property type="molecule type" value="Genomic_DNA"/>
</dbReference>
<dbReference type="RefSeq" id="WP_002211187.1">
    <property type="nucleotide sequence ID" value="NZ_CP009792.1"/>
</dbReference>
<dbReference type="SMR" id="B1JLJ7"/>
<dbReference type="GeneID" id="57976592"/>
<dbReference type="KEGG" id="ypy:YPK_2130"/>
<dbReference type="PATRIC" id="fig|502800.11.peg.2804"/>
<dbReference type="GO" id="GO:0005886">
    <property type="term" value="C:plasma membrane"/>
    <property type="evidence" value="ECO:0007669"/>
    <property type="project" value="UniProtKB-SubCell"/>
</dbReference>
<dbReference type="GO" id="GO:0015199">
    <property type="term" value="F:amino-acid betaine transmembrane transporter activity"/>
    <property type="evidence" value="ECO:0007669"/>
    <property type="project" value="TreeGrafter"/>
</dbReference>
<dbReference type="GO" id="GO:0015297">
    <property type="term" value="F:antiporter activity"/>
    <property type="evidence" value="ECO:0007669"/>
    <property type="project" value="TreeGrafter"/>
</dbReference>
<dbReference type="GO" id="GO:0015220">
    <property type="term" value="F:choline transmembrane transporter activity"/>
    <property type="evidence" value="ECO:0007669"/>
    <property type="project" value="TreeGrafter"/>
</dbReference>
<dbReference type="GO" id="GO:0015606">
    <property type="term" value="F:spermidine transmembrane transporter activity"/>
    <property type="evidence" value="ECO:0007669"/>
    <property type="project" value="UniProtKB-UniRule"/>
</dbReference>
<dbReference type="GO" id="GO:0031460">
    <property type="term" value="P:glycine betaine transport"/>
    <property type="evidence" value="ECO:0007669"/>
    <property type="project" value="TreeGrafter"/>
</dbReference>
<dbReference type="FunFam" id="1.10.3730.20:FF:000001">
    <property type="entry name" value="Quaternary ammonium compound resistance transporter SugE"/>
    <property type="match status" value="1"/>
</dbReference>
<dbReference type="Gene3D" id="1.10.3730.20">
    <property type="match status" value="1"/>
</dbReference>
<dbReference type="HAMAP" id="MF_01597">
    <property type="entry name" value="MdtI"/>
    <property type="match status" value="1"/>
</dbReference>
<dbReference type="InterPro" id="IPR000390">
    <property type="entry name" value="Small_drug/metabolite_transptr"/>
</dbReference>
<dbReference type="InterPro" id="IPR045324">
    <property type="entry name" value="Small_multidrug_res"/>
</dbReference>
<dbReference type="InterPro" id="IPR023737">
    <property type="entry name" value="Spermidine_export_MdtI"/>
</dbReference>
<dbReference type="NCBIfam" id="NF007934">
    <property type="entry name" value="PRK10650.1"/>
    <property type="match status" value="1"/>
</dbReference>
<dbReference type="PANTHER" id="PTHR30561">
    <property type="entry name" value="SMR FAMILY PROTON-DEPENDENT DRUG EFFLUX TRANSPORTER SUGE"/>
    <property type="match status" value="1"/>
</dbReference>
<dbReference type="PANTHER" id="PTHR30561:SF6">
    <property type="entry name" value="SPERMIDINE EXPORT PROTEIN MDTI"/>
    <property type="match status" value="1"/>
</dbReference>
<dbReference type="Pfam" id="PF00893">
    <property type="entry name" value="Multi_Drug_Res"/>
    <property type="match status" value="1"/>
</dbReference>
<dbReference type="SUPFAM" id="SSF103481">
    <property type="entry name" value="Multidrug resistance efflux transporter EmrE"/>
    <property type="match status" value="1"/>
</dbReference>
<feature type="chain" id="PRO_1000197328" description="Spermidine export protein MdtI">
    <location>
        <begin position="1"/>
        <end position="109"/>
    </location>
</feature>
<feature type="transmembrane region" description="Helical" evidence="1">
    <location>
        <begin position="6"/>
        <end position="26"/>
    </location>
</feature>
<feature type="transmembrane region" description="Helical" evidence="1">
    <location>
        <begin position="36"/>
        <end position="56"/>
    </location>
</feature>
<feature type="transmembrane region" description="Helical" evidence="1">
    <location>
        <begin position="64"/>
        <end position="84"/>
    </location>
</feature>
<feature type="transmembrane region" description="Helical" evidence="1">
    <location>
        <begin position="88"/>
        <end position="108"/>
    </location>
</feature>
<proteinExistence type="inferred from homology"/>
<accession>B1JLJ7</accession>
<gene>
    <name evidence="1" type="primary">mdtI</name>
    <name type="ordered locus">YPK_2130</name>
</gene>
<reference key="1">
    <citation type="submission" date="2008-02" db="EMBL/GenBank/DDBJ databases">
        <title>Complete sequence of Yersinia pseudotuberculosis YPIII.</title>
        <authorList>
            <consortium name="US DOE Joint Genome Institute"/>
            <person name="Copeland A."/>
            <person name="Lucas S."/>
            <person name="Lapidus A."/>
            <person name="Glavina del Rio T."/>
            <person name="Dalin E."/>
            <person name="Tice H."/>
            <person name="Bruce D."/>
            <person name="Goodwin L."/>
            <person name="Pitluck S."/>
            <person name="Munk A.C."/>
            <person name="Brettin T."/>
            <person name="Detter J.C."/>
            <person name="Han C."/>
            <person name="Tapia R."/>
            <person name="Schmutz J."/>
            <person name="Larimer F."/>
            <person name="Land M."/>
            <person name="Hauser L."/>
            <person name="Challacombe J.F."/>
            <person name="Green L."/>
            <person name="Lindler L.E."/>
            <person name="Nikolich M.P."/>
            <person name="Richardson P."/>
        </authorList>
    </citation>
    <scope>NUCLEOTIDE SEQUENCE [LARGE SCALE GENOMIC DNA]</scope>
    <source>
        <strain>YPIII</strain>
    </source>
</reference>
<name>MDTI_YERPY</name>
<evidence type="ECO:0000255" key="1">
    <source>
        <dbReference type="HAMAP-Rule" id="MF_01597"/>
    </source>
</evidence>
<keyword id="KW-0997">Cell inner membrane</keyword>
<keyword id="KW-1003">Cell membrane</keyword>
<keyword id="KW-0472">Membrane</keyword>
<keyword id="KW-0812">Transmembrane</keyword>
<keyword id="KW-1133">Transmembrane helix</keyword>
<keyword id="KW-0813">Transport</keyword>
<sequence length="109" mass="11917">MQQLEFYPIAFLILAVMLEIVANILLKMSDGFRRKWLGILSLLSVLGAFSALAQAVKGIELSVAYALWGGFGIAATVAAGWILFNQRLNYKGWIGLILLLAGMVMIKLS</sequence>
<organism>
    <name type="scientific">Yersinia pseudotuberculosis serotype O:3 (strain YPIII)</name>
    <dbReference type="NCBI Taxonomy" id="502800"/>
    <lineage>
        <taxon>Bacteria</taxon>
        <taxon>Pseudomonadati</taxon>
        <taxon>Pseudomonadota</taxon>
        <taxon>Gammaproteobacteria</taxon>
        <taxon>Enterobacterales</taxon>
        <taxon>Yersiniaceae</taxon>
        <taxon>Yersinia</taxon>
    </lineage>
</organism>
<protein>
    <recommendedName>
        <fullName evidence="1">Spermidine export protein MdtI</fullName>
    </recommendedName>
</protein>